<gene>
    <name evidence="1" type="primary">glyA</name>
    <name type="ordered locus">SeHA_C2817</name>
</gene>
<sequence>MLKREMNIADYDAELWQAMEQEKVRQEEHIELIASENYTSPRVMQAQGSQLTNKYAEGYPGKRYYGGCEYVDVVEQLAIDRAKELFGADYANVQPHSGSQANFAVYTALLQPGDTVLGMNLAQGGHLTHGSPVNFSGKLYNIVPYGIDESGKIDYDEMAKLAKEHKPKMIIGGFSAYSGVVDWAKMREIADSIGAYLFVDMAHVAGLIAAGVYPNPVPHAHVVTTTTHKTLAGPRGGLILAKGGDEELYKKLNSAVFPSAQGGPLMHVIAGKAVALKEAMEPEFKVYQQQVAKNAKAMVEVFLNRGYKVVSGGTENHLFLLDLVDKNLTGKEADAALGRANITVNKNSVPNDPKSPFVTSGIRIGSPAVTRRGFKEAEVKELAGWMCDVLDNINDEATIERVKAKVLDICARFPVYA</sequence>
<name>GLYA_SALHS</name>
<protein>
    <recommendedName>
        <fullName evidence="1">Serine hydroxymethyltransferase</fullName>
        <shortName evidence="1">SHMT</shortName>
        <shortName evidence="1">Serine methylase</shortName>
        <ecNumber evidence="1">2.1.2.1</ecNumber>
    </recommendedName>
</protein>
<accession>B4TDC8</accession>
<proteinExistence type="inferred from homology"/>
<keyword id="KW-0028">Amino-acid biosynthesis</keyword>
<keyword id="KW-0963">Cytoplasm</keyword>
<keyword id="KW-0554">One-carbon metabolism</keyword>
<keyword id="KW-0663">Pyridoxal phosphate</keyword>
<keyword id="KW-0808">Transferase</keyword>
<feature type="chain" id="PRO_1000091574" description="Serine hydroxymethyltransferase">
    <location>
        <begin position="1"/>
        <end position="417"/>
    </location>
</feature>
<feature type="binding site" evidence="1">
    <location>
        <position position="121"/>
    </location>
    <ligand>
        <name>(6S)-5,6,7,8-tetrahydrofolate</name>
        <dbReference type="ChEBI" id="CHEBI:57453"/>
    </ligand>
</feature>
<feature type="binding site" evidence="1">
    <location>
        <begin position="125"/>
        <end position="127"/>
    </location>
    <ligand>
        <name>(6S)-5,6,7,8-tetrahydrofolate</name>
        <dbReference type="ChEBI" id="CHEBI:57453"/>
    </ligand>
</feature>
<feature type="binding site" evidence="1">
    <location>
        <begin position="355"/>
        <end position="357"/>
    </location>
    <ligand>
        <name>(6S)-5,6,7,8-tetrahydrofolate</name>
        <dbReference type="ChEBI" id="CHEBI:57453"/>
    </ligand>
</feature>
<feature type="site" description="Plays an important role in substrate specificity" evidence="1">
    <location>
        <position position="228"/>
    </location>
</feature>
<feature type="modified residue" description="N6-(pyridoxal phosphate)lysine" evidence="1">
    <location>
        <position position="229"/>
    </location>
</feature>
<dbReference type="EC" id="2.1.2.1" evidence="1"/>
<dbReference type="EMBL" id="CP001120">
    <property type="protein sequence ID" value="ACF69435.1"/>
    <property type="molecule type" value="Genomic_DNA"/>
</dbReference>
<dbReference type="RefSeq" id="WP_000919178.1">
    <property type="nucleotide sequence ID" value="NC_011083.1"/>
</dbReference>
<dbReference type="SMR" id="B4TDC8"/>
<dbReference type="KEGG" id="seh:SeHA_C2817"/>
<dbReference type="HOGENOM" id="CLU_022477_2_1_6"/>
<dbReference type="UniPathway" id="UPA00193"/>
<dbReference type="UniPathway" id="UPA00288">
    <property type="reaction ID" value="UER01023"/>
</dbReference>
<dbReference type="Proteomes" id="UP000001866">
    <property type="component" value="Chromosome"/>
</dbReference>
<dbReference type="GO" id="GO:0005829">
    <property type="term" value="C:cytosol"/>
    <property type="evidence" value="ECO:0007669"/>
    <property type="project" value="TreeGrafter"/>
</dbReference>
<dbReference type="GO" id="GO:0004372">
    <property type="term" value="F:glycine hydroxymethyltransferase activity"/>
    <property type="evidence" value="ECO:0007669"/>
    <property type="project" value="UniProtKB-UniRule"/>
</dbReference>
<dbReference type="GO" id="GO:0030170">
    <property type="term" value="F:pyridoxal phosphate binding"/>
    <property type="evidence" value="ECO:0007669"/>
    <property type="project" value="UniProtKB-UniRule"/>
</dbReference>
<dbReference type="GO" id="GO:0019264">
    <property type="term" value="P:glycine biosynthetic process from serine"/>
    <property type="evidence" value="ECO:0007669"/>
    <property type="project" value="UniProtKB-UniRule"/>
</dbReference>
<dbReference type="GO" id="GO:0035999">
    <property type="term" value="P:tetrahydrofolate interconversion"/>
    <property type="evidence" value="ECO:0007669"/>
    <property type="project" value="UniProtKB-UniRule"/>
</dbReference>
<dbReference type="CDD" id="cd00378">
    <property type="entry name" value="SHMT"/>
    <property type="match status" value="1"/>
</dbReference>
<dbReference type="FunFam" id="3.40.640.10:FF:000001">
    <property type="entry name" value="Serine hydroxymethyltransferase"/>
    <property type="match status" value="1"/>
</dbReference>
<dbReference type="FunFam" id="3.90.1150.10:FF:000003">
    <property type="entry name" value="Serine hydroxymethyltransferase"/>
    <property type="match status" value="1"/>
</dbReference>
<dbReference type="Gene3D" id="3.90.1150.10">
    <property type="entry name" value="Aspartate Aminotransferase, domain 1"/>
    <property type="match status" value="1"/>
</dbReference>
<dbReference type="Gene3D" id="3.40.640.10">
    <property type="entry name" value="Type I PLP-dependent aspartate aminotransferase-like (Major domain)"/>
    <property type="match status" value="1"/>
</dbReference>
<dbReference type="HAMAP" id="MF_00051">
    <property type="entry name" value="SHMT"/>
    <property type="match status" value="1"/>
</dbReference>
<dbReference type="InterPro" id="IPR015424">
    <property type="entry name" value="PyrdxlP-dep_Trfase"/>
</dbReference>
<dbReference type="InterPro" id="IPR015421">
    <property type="entry name" value="PyrdxlP-dep_Trfase_major"/>
</dbReference>
<dbReference type="InterPro" id="IPR015422">
    <property type="entry name" value="PyrdxlP-dep_Trfase_small"/>
</dbReference>
<dbReference type="InterPro" id="IPR001085">
    <property type="entry name" value="Ser_HO-MeTrfase"/>
</dbReference>
<dbReference type="InterPro" id="IPR049943">
    <property type="entry name" value="Ser_HO-MeTrfase-like"/>
</dbReference>
<dbReference type="InterPro" id="IPR019798">
    <property type="entry name" value="Ser_HO-MeTrfase_PLP_BS"/>
</dbReference>
<dbReference type="InterPro" id="IPR039429">
    <property type="entry name" value="SHMT-like_dom"/>
</dbReference>
<dbReference type="NCBIfam" id="NF000586">
    <property type="entry name" value="PRK00011.1"/>
    <property type="match status" value="1"/>
</dbReference>
<dbReference type="PANTHER" id="PTHR11680">
    <property type="entry name" value="SERINE HYDROXYMETHYLTRANSFERASE"/>
    <property type="match status" value="1"/>
</dbReference>
<dbReference type="PANTHER" id="PTHR11680:SF50">
    <property type="entry name" value="SERINE HYDROXYMETHYLTRANSFERASE"/>
    <property type="match status" value="1"/>
</dbReference>
<dbReference type="Pfam" id="PF00464">
    <property type="entry name" value="SHMT"/>
    <property type="match status" value="1"/>
</dbReference>
<dbReference type="PIRSF" id="PIRSF000412">
    <property type="entry name" value="SHMT"/>
    <property type="match status" value="1"/>
</dbReference>
<dbReference type="SUPFAM" id="SSF53383">
    <property type="entry name" value="PLP-dependent transferases"/>
    <property type="match status" value="1"/>
</dbReference>
<dbReference type="PROSITE" id="PS00096">
    <property type="entry name" value="SHMT"/>
    <property type="match status" value="1"/>
</dbReference>
<evidence type="ECO:0000255" key="1">
    <source>
        <dbReference type="HAMAP-Rule" id="MF_00051"/>
    </source>
</evidence>
<reference key="1">
    <citation type="journal article" date="2011" name="J. Bacteriol.">
        <title>Comparative genomics of 28 Salmonella enterica isolates: evidence for CRISPR-mediated adaptive sublineage evolution.</title>
        <authorList>
            <person name="Fricke W.F."/>
            <person name="Mammel M.K."/>
            <person name="McDermott P.F."/>
            <person name="Tartera C."/>
            <person name="White D.G."/>
            <person name="Leclerc J.E."/>
            <person name="Ravel J."/>
            <person name="Cebula T.A."/>
        </authorList>
    </citation>
    <scope>NUCLEOTIDE SEQUENCE [LARGE SCALE GENOMIC DNA]</scope>
    <source>
        <strain>SL476</strain>
    </source>
</reference>
<organism>
    <name type="scientific">Salmonella heidelberg (strain SL476)</name>
    <dbReference type="NCBI Taxonomy" id="454169"/>
    <lineage>
        <taxon>Bacteria</taxon>
        <taxon>Pseudomonadati</taxon>
        <taxon>Pseudomonadota</taxon>
        <taxon>Gammaproteobacteria</taxon>
        <taxon>Enterobacterales</taxon>
        <taxon>Enterobacteriaceae</taxon>
        <taxon>Salmonella</taxon>
    </lineage>
</organism>
<comment type="function">
    <text evidence="1">Catalyzes the reversible interconversion of serine and glycine with tetrahydrofolate (THF) serving as the one-carbon carrier. This reaction serves as the major source of one-carbon groups required for the biosynthesis of purines, thymidylate, methionine, and other important biomolecules. Also exhibits THF-independent aldolase activity toward beta-hydroxyamino acids, producing glycine and aldehydes, via a retro-aldol mechanism.</text>
</comment>
<comment type="catalytic activity">
    <reaction evidence="1">
        <text>(6R)-5,10-methylene-5,6,7,8-tetrahydrofolate + glycine + H2O = (6S)-5,6,7,8-tetrahydrofolate + L-serine</text>
        <dbReference type="Rhea" id="RHEA:15481"/>
        <dbReference type="ChEBI" id="CHEBI:15377"/>
        <dbReference type="ChEBI" id="CHEBI:15636"/>
        <dbReference type="ChEBI" id="CHEBI:33384"/>
        <dbReference type="ChEBI" id="CHEBI:57305"/>
        <dbReference type="ChEBI" id="CHEBI:57453"/>
        <dbReference type="EC" id="2.1.2.1"/>
    </reaction>
</comment>
<comment type="cofactor">
    <cofactor evidence="1">
        <name>pyridoxal 5'-phosphate</name>
        <dbReference type="ChEBI" id="CHEBI:597326"/>
    </cofactor>
</comment>
<comment type="pathway">
    <text evidence="1">One-carbon metabolism; tetrahydrofolate interconversion.</text>
</comment>
<comment type="pathway">
    <text evidence="1">Amino-acid biosynthesis; glycine biosynthesis; glycine from L-serine: step 1/1.</text>
</comment>
<comment type="subunit">
    <text evidence="1">Homodimer.</text>
</comment>
<comment type="subcellular location">
    <subcellularLocation>
        <location evidence="1">Cytoplasm</location>
    </subcellularLocation>
</comment>
<comment type="similarity">
    <text evidence="1">Belongs to the SHMT family.</text>
</comment>